<organism>
    <name type="scientific">Rickettsia bellii (strain RML369-C)</name>
    <dbReference type="NCBI Taxonomy" id="336407"/>
    <lineage>
        <taxon>Bacteria</taxon>
        <taxon>Pseudomonadati</taxon>
        <taxon>Pseudomonadota</taxon>
        <taxon>Alphaproteobacteria</taxon>
        <taxon>Rickettsiales</taxon>
        <taxon>Rickettsiaceae</taxon>
        <taxon>Rickettsieae</taxon>
        <taxon>Rickettsia</taxon>
        <taxon>belli group</taxon>
    </lineage>
</organism>
<protein>
    <recommendedName>
        <fullName evidence="1">NADH-quinone oxidoreductase subunit A</fullName>
        <ecNumber evidence="1">7.1.1.-</ecNumber>
    </recommendedName>
    <alternativeName>
        <fullName evidence="1">NADH dehydrogenase I subunit A</fullName>
    </alternativeName>
    <alternativeName>
        <fullName evidence="1">NDH-1 subunit A</fullName>
    </alternativeName>
    <alternativeName>
        <fullName evidence="1">NUO1</fullName>
    </alternativeName>
</protein>
<proteinExistence type="inferred from homology"/>
<evidence type="ECO:0000255" key="1">
    <source>
        <dbReference type="HAMAP-Rule" id="MF_01394"/>
    </source>
</evidence>
<sequence>MLQNSELLQEYLPIAIFFGIATLVSSLIMILPNLLATKKYNKDKLEPYECGFEPFDDARSKFDIRFYLVAILFIIFDLEITFLVPWAISLGTIGKIGFFSMMFFLFVLTIGFVYEWKKGALDWE</sequence>
<accession>Q1RJI5</accession>
<reference key="1">
    <citation type="journal article" date="2006" name="PLoS Genet.">
        <title>Genome sequence of Rickettsia bellii illuminates the role of amoebae in gene exchanges between intracellular pathogens.</title>
        <authorList>
            <person name="Ogata H."/>
            <person name="La Scola B."/>
            <person name="Audic S."/>
            <person name="Renesto P."/>
            <person name="Blanc G."/>
            <person name="Robert C."/>
            <person name="Fournier P.-E."/>
            <person name="Claverie J.-M."/>
            <person name="Raoult D."/>
        </authorList>
    </citation>
    <scope>NUCLEOTIDE SEQUENCE [LARGE SCALE GENOMIC DNA]</scope>
    <source>
        <strain>RML369-C</strain>
    </source>
</reference>
<gene>
    <name evidence="1" type="primary">nuoA</name>
    <name type="ordered locus">RBE_0398</name>
</gene>
<keyword id="KW-0997">Cell inner membrane</keyword>
<keyword id="KW-1003">Cell membrane</keyword>
<keyword id="KW-0472">Membrane</keyword>
<keyword id="KW-0520">NAD</keyword>
<keyword id="KW-0874">Quinone</keyword>
<keyword id="KW-1278">Translocase</keyword>
<keyword id="KW-0812">Transmembrane</keyword>
<keyword id="KW-1133">Transmembrane helix</keyword>
<keyword id="KW-0813">Transport</keyword>
<keyword id="KW-0830">Ubiquinone</keyword>
<dbReference type="EC" id="7.1.1.-" evidence="1"/>
<dbReference type="EMBL" id="CP000087">
    <property type="protein sequence ID" value="ABE04479.1"/>
    <property type="molecule type" value="Genomic_DNA"/>
</dbReference>
<dbReference type="RefSeq" id="WP_011477088.1">
    <property type="nucleotide sequence ID" value="NC_007940.1"/>
</dbReference>
<dbReference type="SMR" id="Q1RJI5"/>
<dbReference type="KEGG" id="rbe:RBE_0398"/>
<dbReference type="eggNOG" id="COG0838">
    <property type="taxonomic scope" value="Bacteria"/>
</dbReference>
<dbReference type="HOGENOM" id="CLU_119549_3_1_5"/>
<dbReference type="OrthoDB" id="9791970at2"/>
<dbReference type="Proteomes" id="UP000001951">
    <property type="component" value="Chromosome"/>
</dbReference>
<dbReference type="GO" id="GO:0030964">
    <property type="term" value="C:NADH dehydrogenase complex"/>
    <property type="evidence" value="ECO:0007669"/>
    <property type="project" value="TreeGrafter"/>
</dbReference>
<dbReference type="GO" id="GO:0005886">
    <property type="term" value="C:plasma membrane"/>
    <property type="evidence" value="ECO:0007669"/>
    <property type="project" value="UniProtKB-SubCell"/>
</dbReference>
<dbReference type="GO" id="GO:0008137">
    <property type="term" value="F:NADH dehydrogenase (ubiquinone) activity"/>
    <property type="evidence" value="ECO:0007669"/>
    <property type="project" value="InterPro"/>
</dbReference>
<dbReference type="GO" id="GO:0050136">
    <property type="term" value="F:NADH:ubiquinone reductase (non-electrogenic) activity"/>
    <property type="evidence" value="ECO:0007669"/>
    <property type="project" value="UniProtKB-UniRule"/>
</dbReference>
<dbReference type="GO" id="GO:0048038">
    <property type="term" value="F:quinone binding"/>
    <property type="evidence" value="ECO:0007669"/>
    <property type="project" value="UniProtKB-KW"/>
</dbReference>
<dbReference type="FunFam" id="1.20.58.1610:FF:000004">
    <property type="entry name" value="NADH-quinone oxidoreductase subunit A"/>
    <property type="match status" value="1"/>
</dbReference>
<dbReference type="Gene3D" id="1.20.58.1610">
    <property type="entry name" value="NADH:ubiquinone/plastoquinone oxidoreductase, chain 3"/>
    <property type="match status" value="1"/>
</dbReference>
<dbReference type="HAMAP" id="MF_01394">
    <property type="entry name" value="NDH1_NuoA"/>
    <property type="match status" value="1"/>
</dbReference>
<dbReference type="InterPro" id="IPR023043">
    <property type="entry name" value="NAD(P)H_OxRDtase_bac/plastid"/>
</dbReference>
<dbReference type="InterPro" id="IPR000440">
    <property type="entry name" value="NADH_UbQ/plastoQ_OxRdtase_su3"/>
</dbReference>
<dbReference type="InterPro" id="IPR038430">
    <property type="entry name" value="NDAH_ubi_oxred_su3_sf"/>
</dbReference>
<dbReference type="PANTHER" id="PTHR11058">
    <property type="entry name" value="NADH-UBIQUINONE OXIDOREDUCTASE CHAIN 3"/>
    <property type="match status" value="1"/>
</dbReference>
<dbReference type="PANTHER" id="PTHR11058:SF9">
    <property type="entry name" value="NADH-UBIQUINONE OXIDOREDUCTASE CHAIN 3"/>
    <property type="match status" value="1"/>
</dbReference>
<dbReference type="Pfam" id="PF00507">
    <property type="entry name" value="Oxidored_q4"/>
    <property type="match status" value="1"/>
</dbReference>
<feature type="chain" id="PRO_0000271220" description="NADH-quinone oxidoreductase subunit A">
    <location>
        <begin position="1"/>
        <end position="124"/>
    </location>
</feature>
<feature type="transmembrane region" description="Helical" evidence="1">
    <location>
        <begin position="11"/>
        <end position="31"/>
    </location>
</feature>
<feature type="transmembrane region" description="Helical" evidence="1">
    <location>
        <begin position="68"/>
        <end position="88"/>
    </location>
</feature>
<feature type="transmembrane region" description="Helical" evidence="1">
    <location>
        <begin position="93"/>
        <end position="113"/>
    </location>
</feature>
<comment type="function">
    <text evidence="1">NDH-1 shuttles electrons from NADH, via FMN and iron-sulfur (Fe-S) centers, to quinones in the respiratory chain. The immediate electron acceptor for the enzyme in this species is believed to be ubiquinone. Couples the redox reaction to proton translocation (for every two electrons transferred, four hydrogen ions are translocated across the cytoplasmic membrane), and thus conserves the redox energy in a proton gradient.</text>
</comment>
<comment type="catalytic activity">
    <reaction evidence="1">
        <text>a quinone + NADH + 5 H(+)(in) = a quinol + NAD(+) + 4 H(+)(out)</text>
        <dbReference type="Rhea" id="RHEA:57888"/>
        <dbReference type="ChEBI" id="CHEBI:15378"/>
        <dbReference type="ChEBI" id="CHEBI:24646"/>
        <dbReference type="ChEBI" id="CHEBI:57540"/>
        <dbReference type="ChEBI" id="CHEBI:57945"/>
        <dbReference type="ChEBI" id="CHEBI:132124"/>
    </reaction>
</comment>
<comment type="subunit">
    <text evidence="1">NDH-1 is composed of 14 different subunits. Subunits NuoA, H, J, K, L, M, N constitute the membrane sector of the complex.</text>
</comment>
<comment type="subcellular location">
    <subcellularLocation>
        <location evidence="1">Cell inner membrane</location>
        <topology evidence="1">Multi-pass membrane protein</topology>
    </subcellularLocation>
</comment>
<comment type="similarity">
    <text evidence="1">Belongs to the complex I subunit 3 family.</text>
</comment>
<name>NUOA_RICBR</name>